<protein>
    <recommendedName>
        <fullName evidence="16">Histone deacetylase 19</fullName>
        <shortName evidence="15">AtHD1</shortName>
        <shortName>HD</shortName>
        <ecNumber evidence="8">3.5.1.98</ecNumber>
    </recommendedName>
</protein>
<feature type="chain" id="PRO_0000114721" description="Histone deacetylase 19">
    <location>
        <begin position="1"/>
        <end position="501"/>
    </location>
</feature>
<feature type="region of interest" description="Histone deacetylase">
    <location>
        <begin position="17"/>
        <end position="329"/>
    </location>
</feature>
<feature type="region of interest" description="Disordered" evidence="2">
    <location>
        <begin position="383"/>
        <end position="501"/>
    </location>
</feature>
<feature type="compositionally biased region" description="Acidic residues" evidence="2">
    <location>
        <begin position="397"/>
        <end position="407"/>
    </location>
</feature>
<feature type="compositionally biased region" description="Basic and acidic residues" evidence="2">
    <location>
        <begin position="422"/>
        <end position="457"/>
    </location>
</feature>
<feature type="compositionally biased region" description="Basic and acidic residues" evidence="2">
    <location>
        <begin position="479"/>
        <end position="488"/>
    </location>
</feature>
<feature type="active site" description="Proton donor/acceptor" evidence="1">
    <location>
        <position position="149"/>
    </location>
</feature>
<feature type="binding site" evidence="1">
    <location>
        <position position="184"/>
    </location>
    <ligand>
        <name>Zn(2+)</name>
        <dbReference type="ChEBI" id="CHEBI:29105"/>
    </ligand>
</feature>
<feature type="binding site" evidence="1">
    <location>
        <position position="186"/>
    </location>
    <ligand>
        <name>Zn(2+)</name>
        <dbReference type="ChEBI" id="CHEBI:29105"/>
    </ligand>
</feature>
<feature type="binding site" evidence="1">
    <location>
        <position position="272"/>
    </location>
    <ligand>
        <name>Zn(2+)</name>
        <dbReference type="ChEBI" id="CHEBI:29105"/>
    </ligand>
</feature>
<feature type="site" description="Polarizes the scissile carbonyl of the substrate" evidence="1">
    <location>
        <position position="311"/>
    </location>
</feature>
<feature type="modified residue" description="Phosphoserine" evidence="20">
    <location>
        <position position="416"/>
    </location>
</feature>
<feature type="sequence conflict" description="In Ref. 1; AAB66486 and 2; AAG28474." evidence="17" ref="1 2">
    <original>D</original>
    <variation>E</variation>
    <location>
        <position position="69"/>
    </location>
</feature>
<reference key="1">
    <citation type="submission" date="1997-08" db="EMBL/GenBank/DDBJ databases">
        <title>Characterization of a histone deacetylase (EST G11C3T7) in Arabidopsis thaliana.</title>
        <authorList>
            <person name="Tomihama T."/>
            <person name="Shoji K."/>
            <person name="Hanyu H."/>
            <person name="Okano T."/>
        </authorList>
    </citation>
    <scope>NUCLEOTIDE SEQUENCE [MRNA]</scope>
    <source>
        <strain>cv. Columbia</strain>
    </source>
</reference>
<reference key="2">
    <citation type="journal article" date="2000" name="Plant Mol. Biol.">
        <title>Functional analysis of a RPD3 histone deacetylase homologue in Arabidopsis thaliana.</title>
        <authorList>
            <person name="Wu K."/>
            <person name="Malik K."/>
            <person name="Tian L."/>
            <person name="Brown D."/>
            <person name="Miki B."/>
        </authorList>
    </citation>
    <scope>NUCLEOTIDE SEQUENCE [MRNA]</scope>
    <scope>FUNCTION</scope>
    <scope>TISSUE SPECIFICITY</scope>
    <source>
        <strain>cv. Columbia</strain>
    </source>
</reference>
<reference key="3">
    <citation type="journal article" date="1999" name="Nature">
        <title>Sequence and analysis of chromosome 4 of the plant Arabidopsis thaliana.</title>
        <authorList>
            <person name="Mayer K.F.X."/>
            <person name="Schueller C."/>
            <person name="Wambutt R."/>
            <person name="Murphy G."/>
            <person name="Volckaert G."/>
            <person name="Pohl T."/>
            <person name="Duesterhoeft A."/>
            <person name="Stiekema W."/>
            <person name="Entian K.-D."/>
            <person name="Terryn N."/>
            <person name="Harris B."/>
            <person name="Ansorge W."/>
            <person name="Brandt P."/>
            <person name="Grivell L.A."/>
            <person name="Rieger M."/>
            <person name="Weichselgartner M."/>
            <person name="de Simone V."/>
            <person name="Obermaier B."/>
            <person name="Mache R."/>
            <person name="Mueller M."/>
            <person name="Kreis M."/>
            <person name="Delseny M."/>
            <person name="Puigdomenech P."/>
            <person name="Watson M."/>
            <person name="Schmidtheini T."/>
            <person name="Reichert B."/>
            <person name="Portetelle D."/>
            <person name="Perez-Alonso M."/>
            <person name="Boutry M."/>
            <person name="Bancroft I."/>
            <person name="Vos P."/>
            <person name="Hoheisel J."/>
            <person name="Zimmermann W."/>
            <person name="Wedler H."/>
            <person name="Ridley P."/>
            <person name="Langham S.-A."/>
            <person name="McCullagh B."/>
            <person name="Bilham L."/>
            <person name="Robben J."/>
            <person name="van der Schueren J."/>
            <person name="Grymonprez B."/>
            <person name="Chuang Y.-J."/>
            <person name="Vandenbussche F."/>
            <person name="Braeken M."/>
            <person name="Weltjens I."/>
            <person name="Voet M."/>
            <person name="Bastiaens I."/>
            <person name="Aert R."/>
            <person name="Defoor E."/>
            <person name="Weitzenegger T."/>
            <person name="Bothe G."/>
            <person name="Ramsperger U."/>
            <person name="Hilbert H."/>
            <person name="Braun M."/>
            <person name="Holzer E."/>
            <person name="Brandt A."/>
            <person name="Peters S."/>
            <person name="van Staveren M."/>
            <person name="Dirkse W."/>
            <person name="Mooijman P."/>
            <person name="Klein Lankhorst R."/>
            <person name="Rose M."/>
            <person name="Hauf J."/>
            <person name="Koetter P."/>
            <person name="Berneiser S."/>
            <person name="Hempel S."/>
            <person name="Feldpausch M."/>
            <person name="Lamberth S."/>
            <person name="Van den Daele H."/>
            <person name="De Keyser A."/>
            <person name="Buysshaert C."/>
            <person name="Gielen J."/>
            <person name="Villarroel R."/>
            <person name="De Clercq R."/>
            <person name="van Montagu M."/>
            <person name="Rogers J."/>
            <person name="Cronin A."/>
            <person name="Quail M.A."/>
            <person name="Bray-Allen S."/>
            <person name="Clark L."/>
            <person name="Doggett J."/>
            <person name="Hall S."/>
            <person name="Kay M."/>
            <person name="Lennard N."/>
            <person name="McLay K."/>
            <person name="Mayes R."/>
            <person name="Pettett A."/>
            <person name="Rajandream M.A."/>
            <person name="Lyne M."/>
            <person name="Benes V."/>
            <person name="Rechmann S."/>
            <person name="Borkova D."/>
            <person name="Bloecker H."/>
            <person name="Scharfe M."/>
            <person name="Grimm M."/>
            <person name="Loehnert T.-H."/>
            <person name="Dose S."/>
            <person name="de Haan M."/>
            <person name="Maarse A.C."/>
            <person name="Schaefer M."/>
            <person name="Mueller-Auer S."/>
            <person name="Gabel C."/>
            <person name="Fuchs M."/>
            <person name="Fartmann B."/>
            <person name="Granderath K."/>
            <person name="Dauner D."/>
            <person name="Herzl A."/>
            <person name="Neumann S."/>
            <person name="Argiriou A."/>
            <person name="Vitale D."/>
            <person name="Liguori R."/>
            <person name="Piravandi E."/>
            <person name="Massenet O."/>
            <person name="Quigley F."/>
            <person name="Clabauld G."/>
            <person name="Muendlein A."/>
            <person name="Felber R."/>
            <person name="Schnabl S."/>
            <person name="Hiller R."/>
            <person name="Schmidt W."/>
            <person name="Lecharny A."/>
            <person name="Aubourg S."/>
            <person name="Chefdor F."/>
            <person name="Cooke R."/>
            <person name="Berger C."/>
            <person name="Monfort A."/>
            <person name="Casacuberta E."/>
            <person name="Gibbons T."/>
            <person name="Weber N."/>
            <person name="Vandenbol M."/>
            <person name="Bargues M."/>
            <person name="Terol J."/>
            <person name="Torres A."/>
            <person name="Perez-Perez A."/>
            <person name="Purnelle B."/>
            <person name="Bent E."/>
            <person name="Johnson S."/>
            <person name="Tacon D."/>
            <person name="Jesse T."/>
            <person name="Heijnen L."/>
            <person name="Schwarz S."/>
            <person name="Scholler P."/>
            <person name="Heber S."/>
            <person name="Francs P."/>
            <person name="Bielke C."/>
            <person name="Frishman D."/>
            <person name="Haase D."/>
            <person name="Lemcke K."/>
            <person name="Mewes H.-W."/>
            <person name="Stocker S."/>
            <person name="Zaccaria P."/>
            <person name="Bevan M."/>
            <person name="Wilson R.K."/>
            <person name="de la Bastide M."/>
            <person name="Habermann K."/>
            <person name="Parnell L."/>
            <person name="Dedhia N."/>
            <person name="Gnoj L."/>
            <person name="Schutz K."/>
            <person name="Huang E."/>
            <person name="Spiegel L."/>
            <person name="Sekhon M."/>
            <person name="Murray J."/>
            <person name="Sheet P."/>
            <person name="Cordes M."/>
            <person name="Abu-Threideh J."/>
            <person name="Stoneking T."/>
            <person name="Kalicki J."/>
            <person name="Graves T."/>
            <person name="Harmon G."/>
            <person name="Edwards J."/>
            <person name="Latreille P."/>
            <person name="Courtney L."/>
            <person name="Cloud J."/>
            <person name="Abbott A."/>
            <person name="Scott K."/>
            <person name="Johnson D."/>
            <person name="Minx P."/>
            <person name="Bentley D."/>
            <person name="Fulton B."/>
            <person name="Miller N."/>
            <person name="Greco T."/>
            <person name="Kemp K."/>
            <person name="Kramer J."/>
            <person name="Fulton L."/>
            <person name="Mardis E."/>
            <person name="Dante M."/>
            <person name="Pepin K."/>
            <person name="Hillier L.W."/>
            <person name="Nelson J."/>
            <person name="Spieth J."/>
            <person name="Ryan E."/>
            <person name="Andrews S."/>
            <person name="Geisel C."/>
            <person name="Layman D."/>
            <person name="Du H."/>
            <person name="Ali J."/>
            <person name="Berghoff A."/>
            <person name="Jones K."/>
            <person name="Drone K."/>
            <person name="Cotton M."/>
            <person name="Joshu C."/>
            <person name="Antonoiu B."/>
            <person name="Zidanic M."/>
            <person name="Strong C."/>
            <person name="Sun H."/>
            <person name="Lamar B."/>
            <person name="Yordan C."/>
            <person name="Ma P."/>
            <person name="Zhong J."/>
            <person name="Preston R."/>
            <person name="Vil D."/>
            <person name="Shekher M."/>
            <person name="Matero A."/>
            <person name="Shah R."/>
            <person name="Swaby I.K."/>
            <person name="O'Shaughnessy A."/>
            <person name="Rodriguez M."/>
            <person name="Hoffman J."/>
            <person name="Till S."/>
            <person name="Granat S."/>
            <person name="Shohdy N."/>
            <person name="Hasegawa A."/>
            <person name="Hameed A."/>
            <person name="Lodhi M."/>
            <person name="Johnson A."/>
            <person name="Chen E."/>
            <person name="Marra M.A."/>
            <person name="Martienssen R."/>
            <person name="McCombie W.R."/>
        </authorList>
    </citation>
    <scope>NUCLEOTIDE SEQUENCE [LARGE SCALE GENOMIC DNA]</scope>
    <source>
        <strain>cv. Columbia</strain>
    </source>
</reference>
<reference key="4">
    <citation type="journal article" date="2017" name="Plant J.">
        <title>Araport11: a complete reannotation of the Arabidopsis thaliana reference genome.</title>
        <authorList>
            <person name="Cheng C.Y."/>
            <person name="Krishnakumar V."/>
            <person name="Chan A.P."/>
            <person name="Thibaud-Nissen F."/>
            <person name="Schobel S."/>
            <person name="Town C.D."/>
        </authorList>
    </citation>
    <scope>GENOME REANNOTATION</scope>
    <source>
        <strain>cv. Columbia</strain>
    </source>
</reference>
<reference key="5">
    <citation type="journal article" date="2003" name="Science">
        <title>Empirical analysis of transcriptional activity in the Arabidopsis genome.</title>
        <authorList>
            <person name="Yamada K."/>
            <person name="Lim J."/>
            <person name="Dale J.M."/>
            <person name="Chen H."/>
            <person name="Shinn P."/>
            <person name="Palm C.J."/>
            <person name="Southwick A.M."/>
            <person name="Wu H.C."/>
            <person name="Kim C.J."/>
            <person name="Nguyen M."/>
            <person name="Pham P.K."/>
            <person name="Cheuk R.F."/>
            <person name="Karlin-Newmann G."/>
            <person name="Liu S.X."/>
            <person name="Lam B."/>
            <person name="Sakano H."/>
            <person name="Wu T."/>
            <person name="Yu G."/>
            <person name="Miranda M."/>
            <person name="Quach H.L."/>
            <person name="Tripp M."/>
            <person name="Chang C.H."/>
            <person name="Lee J.M."/>
            <person name="Toriumi M.J."/>
            <person name="Chan M.M."/>
            <person name="Tang C.C."/>
            <person name="Onodera C.S."/>
            <person name="Deng J.M."/>
            <person name="Akiyama K."/>
            <person name="Ansari Y."/>
            <person name="Arakawa T."/>
            <person name="Banh J."/>
            <person name="Banno F."/>
            <person name="Bowser L."/>
            <person name="Brooks S.Y."/>
            <person name="Carninci P."/>
            <person name="Chao Q."/>
            <person name="Choy N."/>
            <person name="Enju A."/>
            <person name="Goldsmith A.D."/>
            <person name="Gurjal M."/>
            <person name="Hansen N.F."/>
            <person name="Hayashizaki Y."/>
            <person name="Johnson-Hopson C."/>
            <person name="Hsuan V.W."/>
            <person name="Iida K."/>
            <person name="Karnes M."/>
            <person name="Khan S."/>
            <person name="Koesema E."/>
            <person name="Ishida J."/>
            <person name="Jiang P.X."/>
            <person name="Jones T."/>
            <person name="Kawai J."/>
            <person name="Kamiya A."/>
            <person name="Meyers C."/>
            <person name="Nakajima M."/>
            <person name="Narusaka M."/>
            <person name="Seki M."/>
            <person name="Sakurai T."/>
            <person name="Satou M."/>
            <person name="Tamse R."/>
            <person name="Vaysberg M."/>
            <person name="Wallender E.K."/>
            <person name="Wong C."/>
            <person name="Yamamura Y."/>
            <person name="Yuan S."/>
            <person name="Shinozaki K."/>
            <person name="Davis R.W."/>
            <person name="Theologis A."/>
            <person name="Ecker J.R."/>
        </authorList>
    </citation>
    <scope>NUCLEOTIDE SEQUENCE [LARGE SCALE MRNA]</scope>
    <source>
        <strain>cv. Columbia</strain>
    </source>
</reference>
<reference key="6">
    <citation type="submission" date="2006-07" db="EMBL/GenBank/DDBJ databases">
        <title>Large-scale analysis of RIKEN Arabidopsis full-length (RAFL) cDNAs.</title>
        <authorList>
            <person name="Totoki Y."/>
            <person name="Seki M."/>
            <person name="Ishida J."/>
            <person name="Nakajima M."/>
            <person name="Enju A."/>
            <person name="Kamiya A."/>
            <person name="Narusaka M."/>
            <person name="Shin-i T."/>
            <person name="Nakagawa M."/>
            <person name="Sakamoto N."/>
            <person name="Oishi K."/>
            <person name="Kohara Y."/>
            <person name="Kobayashi M."/>
            <person name="Toyoda A."/>
            <person name="Sakaki Y."/>
            <person name="Sakurai T."/>
            <person name="Iida K."/>
            <person name="Akiyama K."/>
            <person name="Satou M."/>
            <person name="Toyoda T."/>
            <person name="Konagaya A."/>
            <person name="Carninci P."/>
            <person name="Kawai J."/>
            <person name="Hayashizaki Y."/>
            <person name="Shinozaki K."/>
        </authorList>
    </citation>
    <scope>NUCLEOTIDE SEQUENCE [LARGE SCALE MRNA]</scope>
    <source>
        <strain>cv. Columbia</strain>
    </source>
</reference>
<reference key="7">
    <citation type="journal article" date="2001" name="Proc. Natl. Acad. Sci. U.S.A.">
        <title>Blocking histone deacetylation in Arabidopsis induces pleiotropic effects on plant gene regulation and development.</title>
        <authorList>
            <person name="Tian L."/>
            <person name="Chen Z.J."/>
        </authorList>
    </citation>
    <scope>FUNCTION</scope>
    <scope>TISSUE SPECIFICITY</scope>
</reference>
<reference key="8">
    <citation type="journal article" date="2002" name="Nucleic Acids Res.">
        <title>Analysis of histone acetyltransferase and histone deacetylase families of Arabidopsis thaliana suggests functional diversification of chromatin modification among multicellular eukaryotes.</title>
        <authorList>
            <person name="Pandey R."/>
            <person name="Mueller A."/>
            <person name="Napoli C.A."/>
            <person name="Selinger D.A."/>
            <person name="Pikaard C.S."/>
            <person name="Richards E.J."/>
            <person name="Bender J."/>
            <person name="Mount D.W."/>
            <person name="Jorgensen R.A."/>
        </authorList>
    </citation>
    <scope>GENE FAMILY</scope>
    <scope>NOMENCLATURE</scope>
</reference>
<reference key="9">
    <citation type="journal article" date="2005" name="Plant Cell">
        <title>HISTONE DEACETYLASE19 is involved in jasmonic acid and ethylene signaling of pathogen response in Arabidopsis.</title>
        <authorList>
            <person name="Zhou C."/>
            <person name="Zhang L."/>
            <person name="Duan J."/>
            <person name="Miki B."/>
            <person name="Wu K."/>
        </authorList>
    </citation>
    <scope>FUNCTION</scope>
    <scope>SUBCELLULAR LOCATION</scope>
    <scope>INDUCTION</scope>
</reference>
<reference key="10">
    <citation type="journal article" date="2005" name="Plant Cell">
        <title>Role of an Arabidopsis AP2/EREBP-type transcriptional repressor in abscisic acid and drought stress responses.</title>
        <authorList>
            <person name="Song C.-P."/>
            <person name="Agarwal M."/>
            <person name="Ohta M."/>
            <person name="Guo Y."/>
            <person name="Halfter U."/>
            <person name="Wang P."/>
            <person name="Zhu J.-K."/>
        </authorList>
    </citation>
    <scope>INTERACTION WITH SIN3</scope>
</reference>
<reference key="11">
    <citation type="journal article" date="2006" name="Cell Res.">
        <title>Arabidopsis thaliana histone deacetylase 1 (AtHD1) is localized in euchromatic regions and demonstrates histone deacetylase activity in vitro.</title>
        <authorList>
            <person name="Fong P.M."/>
            <person name="Tian L."/>
            <person name="Chen Z.J."/>
        </authorList>
    </citation>
    <scope>FUNCTION</scope>
    <scope>CATALYTIC ACTIVITY</scope>
    <scope>SUBCELLULAR LOCATION</scope>
    <scope>TISSUE SPECIFICITY</scope>
    <scope>INDUCTION</scope>
</reference>
<reference key="12">
    <citation type="journal article" date="2006" name="Plant Mol. Biol.">
        <title>AtSAP18, an orthologue of human SAP18, is involved in the regulation of salt stress and mediates transcriptional repression in Arabidopsis.</title>
        <authorList>
            <person name="Song C.-P."/>
            <person name="Galbraith D.W."/>
        </authorList>
    </citation>
    <scope>INTERACTION WITH SAP18</scope>
</reference>
<reference key="13">
    <citation type="journal article" date="2007" name="Mol. Cell. Biol.">
        <title>The transcription corepressor LEUNIG interacts with the histone deacetylase HDA19 and mediator components MED14 (SWP) and CDK8 (HEN3) to repress transcription.</title>
        <authorList>
            <person name="Gonzalez D."/>
            <person name="Bowen A.J."/>
            <person name="Carroll T.S."/>
            <person name="Conlan R.S."/>
        </authorList>
    </citation>
    <scope>INTERACTION WITH MED14; LUG AND CDKE-1</scope>
</reference>
<reference key="14">
    <citation type="journal article" date="2009" name="Plant Physiol.">
        <title>Large-scale Arabidopsis phosphoproteome profiling reveals novel chloroplast kinase substrates and phosphorylation networks.</title>
        <authorList>
            <person name="Reiland S."/>
            <person name="Messerli G."/>
            <person name="Baerenfaller K."/>
            <person name="Gerrits B."/>
            <person name="Endler A."/>
            <person name="Grossmann J."/>
            <person name="Gruissem W."/>
            <person name="Baginsky S."/>
        </authorList>
    </citation>
    <scope>PHOSPHORYLATION [LARGE SCALE ANALYSIS] AT SER-416</scope>
    <scope>IDENTIFICATION BY MASS SPECTROMETRY [LARGE SCALE ANALYSIS]</scope>
</reference>
<reference key="15">
    <citation type="journal article" date="2010" name="Proc. Natl. Acad. Sci. U.S.A.">
        <title>Arabidopsis resistance protein SNC1 activates immune responses through association with a transcriptional corepressor.</title>
        <authorList>
            <person name="Zhu Z."/>
            <person name="Xu F."/>
            <person name="Zhang Y."/>
            <person name="Cheng Y.T."/>
            <person name="Wiermer M."/>
            <person name="Li X."/>
            <person name="Zhang Y."/>
        </authorList>
    </citation>
    <scope>INTERACTION WITH TPR1</scope>
</reference>
<reference key="16">
    <citation type="journal article" date="2012" name="Development">
        <title>APETALA2 negatively regulates multiple floral organ identity genes in Arabidopsis by recruiting the co-repressor TOPLESS and the histone deacetylase HDA19.</title>
        <authorList>
            <person name="Krogan N.T."/>
            <person name="Hogan K."/>
            <person name="Long J.A."/>
        </authorList>
    </citation>
    <scope>FUNCTION</scope>
    <scope>INTERACTION WITH TPL</scope>
</reference>
<reference key="17">
    <citation type="journal article" date="2012" name="J. Biol. Chem.">
        <title>The AT-hook motif-containing protein AHL22 regulates flowering initiation by modifying FLOWERING LOCUS T chromatin in Arabidopsis.</title>
        <authorList>
            <person name="Yun J."/>
            <person name="Kim Y.S."/>
            <person name="Jung J.H."/>
            <person name="Seo P.J."/>
            <person name="Park C.M."/>
        </authorList>
    </citation>
    <scope>INTERACTION WITH AHL22</scope>
</reference>
<reference key="18">
    <citation type="journal article" date="2017" name="Plant Physiol.">
        <title>The distinct roles of class I and II RPD3-like histone deacetylases in salinity stress response.</title>
        <authorList>
            <person name="Ueda M."/>
            <person name="Matsui A."/>
            <person name="Tanaka M."/>
            <person name="Nakamura T."/>
            <person name="Abe T."/>
            <person name="Sako K."/>
            <person name="Sasaki T."/>
            <person name="Kim J.M."/>
            <person name="Ito A."/>
            <person name="Nishino N."/>
            <person name="Shimada H."/>
            <person name="Yoshida M."/>
            <person name="Seki M."/>
        </authorList>
    </citation>
    <scope>FUNCTION</scope>
</reference>
<gene>
    <name evidence="16" type="primary">HDA19</name>
    <name evidence="15" type="synonym">HD1</name>
    <name type="synonym">HDA1</name>
    <name evidence="14" type="synonym">RPD3A</name>
    <name evidence="18" type="ordered locus">At4g38130</name>
    <name evidence="19" type="ORF">F20D10.250</name>
</gene>
<dbReference type="EC" id="3.5.1.98" evidence="8"/>
<dbReference type="EMBL" id="AF014824">
    <property type="protein sequence ID" value="AAB66486.1"/>
    <property type="molecule type" value="mRNA"/>
</dbReference>
<dbReference type="EMBL" id="AF195547">
    <property type="protein sequence ID" value="AAG28474.1"/>
    <property type="molecule type" value="mRNA"/>
</dbReference>
<dbReference type="EMBL" id="AL035538">
    <property type="protein sequence ID" value="CAB37553.1"/>
    <property type="molecule type" value="Genomic_DNA"/>
</dbReference>
<dbReference type="EMBL" id="AL161593">
    <property type="protein sequence ID" value="CAB80478.1"/>
    <property type="molecule type" value="Genomic_DNA"/>
</dbReference>
<dbReference type="EMBL" id="CP002687">
    <property type="protein sequence ID" value="AEE86881.1"/>
    <property type="molecule type" value="Genomic_DNA"/>
</dbReference>
<dbReference type="EMBL" id="AY093153">
    <property type="protein sequence ID" value="AAM13152.1"/>
    <property type="molecule type" value="mRNA"/>
</dbReference>
<dbReference type="EMBL" id="BT008873">
    <property type="protein sequence ID" value="AAP68312.1"/>
    <property type="molecule type" value="mRNA"/>
</dbReference>
<dbReference type="EMBL" id="AK226389">
    <property type="protein sequence ID" value="BAE98535.1"/>
    <property type="molecule type" value="mRNA"/>
</dbReference>
<dbReference type="PIR" id="T05640">
    <property type="entry name" value="T05640"/>
</dbReference>
<dbReference type="RefSeq" id="NP_195526.1">
    <molecule id="O22446-1"/>
    <property type="nucleotide sequence ID" value="NM_119974.4"/>
</dbReference>
<dbReference type="SMR" id="O22446"/>
<dbReference type="BioGRID" id="15249">
    <property type="interactions" value="18"/>
</dbReference>
<dbReference type="DIP" id="DIP-33483N"/>
<dbReference type="FunCoup" id="O22446">
    <property type="interactions" value="4622"/>
</dbReference>
<dbReference type="IntAct" id="O22446">
    <property type="interactions" value="8"/>
</dbReference>
<dbReference type="STRING" id="3702.O22446"/>
<dbReference type="iPTMnet" id="O22446"/>
<dbReference type="PaxDb" id="3702-AT4G38130.1"/>
<dbReference type="ProteomicsDB" id="230288">
    <molecule id="O22446-1"/>
</dbReference>
<dbReference type="EnsemblPlants" id="AT4G38130.1">
    <molecule id="O22446-1"/>
    <property type="protein sequence ID" value="AT4G38130.1"/>
    <property type="gene ID" value="AT4G38130"/>
</dbReference>
<dbReference type="GeneID" id="829969"/>
<dbReference type="Gramene" id="AT4G38130.1">
    <molecule id="O22446-1"/>
    <property type="protein sequence ID" value="AT4G38130.1"/>
    <property type="gene ID" value="AT4G38130"/>
</dbReference>
<dbReference type="KEGG" id="ath:AT4G38130"/>
<dbReference type="Araport" id="AT4G38130"/>
<dbReference type="TAIR" id="AT4G38130">
    <property type="gene designation" value="HD1"/>
</dbReference>
<dbReference type="eggNOG" id="KOG1342">
    <property type="taxonomic scope" value="Eukaryota"/>
</dbReference>
<dbReference type="InParanoid" id="O22446"/>
<dbReference type="OrthoDB" id="1918432at2759"/>
<dbReference type="PhylomeDB" id="O22446"/>
<dbReference type="BRENDA" id="3.5.1.98">
    <property type="organism ID" value="399"/>
</dbReference>
<dbReference type="CD-CODE" id="4299E36E">
    <property type="entry name" value="Nucleolus"/>
</dbReference>
<dbReference type="PRO" id="PR:O22446"/>
<dbReference type="Proteomes" id="UP000006548">
    <property type="component" value="Chromosome 4"/>
</dbReference>
<dbReference type="ExpressionAtlas" id="O22446">
    <property type="expression patterns" value="baseline and differential"/>
</dbReference>
<dbReference type="GO" id="GO:0000118">
    <property type="term" value="C:histone deacetylase complex"/>
    <property type="evidence" value="ECO:0000353"/>
    <property type="project" value="TAIR"/>
</dbReference>
<dbReference type="GO" id="GO:0005634">
    <property type="term" value="C:nucleus"/>
    <property type="evidence" value="ECO:0000314"/>
    <property type="project" value="TAIR"/>
</dbReference>
<dbReference type="GO" id="GO:0004407">
    <property type="term" value="F:histone deacetylase activity"/>
    <property type="evidence" value="ECO:0000314"/>
    <property type="project" value="TAIR"/>
</dbReference>
<dbReference type="GO" id="GO:0141221">
    <property type="term" value="F:histone deacetylase activity, hydrolytic mechanism"/>
    <property type="evidence" value="ECO:0007669"/>
    <property type="project" value="UniProtKB-EC"/>
</dbReference>
<dbReference type="GO" id="GO:0008270">
    <property type="term" value="F:zinc ion binding"/>
    <property type="evidence" value="ECO:0000250"/>
    <property type="project" value="UniProtKB"/>
</dbReference>
<dbReference type="GO" id="GO:0006325">
    <property type="term" value="P:chromatin organization"/>
    <property type="evidence" value="ECO:0007669"/>
    <property type="project" value="UniProtKB-KW"/>
</dbReference>
<dbReference type="GO" id="GO:0042742">
    <property type="term" value="P:defense response to bacterium"/>
    <property type="evidence" value="ECO:0000315"/>
    <property type="project" value="TAIR"/>
</dbReference>
<dbReference type="GO" id="GO:0009294">
    <property type="term" value="P:DNA-mediated transformation"/>
    <property type="evidence" value="ECO:0000315"/>
    <property type="project" value="TAIR"/>
</dbReference>
<dbReference type="GO" id="GO:0009861">
    <property type="term" value="P:jasmonic acid and ethylene-dependent systemic resistance"/>
    <property type="evidence" value="ECO:0000315"/>
    <property type="project" value="TAIR"/>
</dbReference>
<dbReference type="GO" id="GO:0045892">
    <property type="term" value="P:negative regulation of DNA-templated transcription"/>
    <property type="evidence" value="ECO:0000314"/>
    <property type="project" value="TAIR"/>
</dbReference>
<dbReference type="GO" id="GO:1901001">
    <property type="term" value="P:negative regulation of response to salt stress"/>
    <property type="evidence" value="ECO:0000315"/>
    <property type="project" value="UniProtKB"/>
</dbReference>
<dbReference type="GO" id="GO:1902459">
    <property type="term" value="P:positive regulation of stem cell population maintenance"/>
    <property type="evidence" value="ECO:0000316"/>
    <property type="project" value="TAIR"/>
</dbReference>
<dbReference type="GO" id="GO:2000026">
    <property type="term" value="P:regulation of multicellular organismal development"/>
    <property type="evidence" value="ECO:0000315"/>
    <property type="project" value="TAIR"/>
</dbReference>
<dbReference type="FunFam" id="3.40.800.20:FF:000001">
    <property type="entry name" value="Histone deacetylase"/>
    <property type="match status" value="1"/>
</dbReference>
<dbReference type="Gene3D" id="3.40.800.20">
    <property type="entry name" value="Histone deacetylase domain"/>
    <property type="match status" value="1"/>
</dbReference>
<dbReference type="InterPro" id="IPR050284">
    <property type="entry name" value="HDAC_PDAC"/>
</dbReference>
<dbReference type="InterPro" id="IPR000286">
    <property type="entry name" value="His_deacetylse"/>
</dbReference>
<dbReference type="InterPro" id="IPR003084">
    <property type="entry name" value="His_deacetylse_1"/>
</dbReference>
<dbReference type="InterPro" id="IPR023801">
    <property type="entry name" value="His_deacetylse_dom"/>
</dbReference>
<dbReference type="InterPro" id="IPR037138">
    <property type="entry name" value="His_deacetylse_dom_sf"/>
</dbReference>
<dbReference type="InterPro" id="IPR023696">
    <property type="entry name" value="Ureohydrolase_dom_sf"/>
</dbReference>
<dbReference type="PANTHER" id="PTHR10625:SF44">
    <property type="entry name" value="HISTONE DEACETYLASE 19"/>
    <property type="match status" value="1"/>
</dbReference>
<dbReference type="PANTHER" id="PTHR10625">
    <property type="entry name" value="HISTONE DEACETYLASE HDAC1-RELATED"/>
    <property type="match status" value="1"/>
</dbReference>
<dbReference type="Pfam" id="PF00850">
    <property type="entry name" value="Hist_deacetyl"/>
    <property type="match status" value="1"/>
</dbReference>
<dbReference type="PIRSF" id="PIRSF037913">
    <property type="entry name" value="His_deacetylse_1"/>
    <property type="match status" value="1"/>
</dbReference>
<dbReference type="PRINTS" id="PR01270">
    <property type="entry name" value="HDASUPER"/>
</dbReference>
<dbReference type="PRINTS" id="PR01271">
    <property type="entry name" value="HISDACETLASE"/>
</dbReference>
<dbReference type="SUPFAM" id="SSF52768">
    <property type="entry name" value="Arginase/deacetylase"/>
    <property type="match status" value="1"/>
</dbReference>
<comment type="function">
    <text evidence="3 4 5 8 12 13">Responsible for the deacetylation of lysine residues on the N-terminal part of the core histones (H2A, H2B, H3 and H4). Histone deacetylation gives a tag for epigenetic repression and plays an important role in transcriptional regulation, cell cycle progression and developmental events. Histone deacetylases act via the formation of large multiprotein complexes. HDA19 is involved in jasmonic acid and ethylene signaling of pathogen response. Part of a repressor complex including APETALA2 (AP2) and TOPLESS (TPL) that control the expression domains of numerous floral organ identity genes (PubMed:23034631). Involved in negative regulation of salinity stress response (PubMed:29018096). Represses the expression of stress tolerance-related genes, genes coding for late embryogenesis abundant (LEA) proteins that prevent protein aggregation, and positive regulators of abscisic acid (ABA) signaling, such as ABI5 and NAC019 (PubMed:29018096).</text>
</comment>
<comment type="catalytic activity">
    <reaction evidence="8">
        <text>N(6)-acetyl-L-lysyl-[histone] + H2O = L-lysyl-[histone] + acetate</text>
        <dbReference type="Rhea" id="RHEA:58196"/>
        <dbReference type="Rhea" id="RHEA-COMP:9845"/>
        <dbReference type="Rhea" id="RHEA-COMP:11338"/>
        <dbReference type="ChEBI" id="CHEBI:15377"/>
        <dbReference type="ChEBI" id="CHEBI:29969"/>
        <dbReference type="ChEBI" id="CHEBI:30089"/>
        <dbReference type="ChEBI" id="CHEBI:61930"/>
        <dbReference type="EC" id="3.5.1.98"/>
    </reaction>
</comment>
<comment type="cofactor">
    <cofactor evidence="1">
        <name>Zn(2+)</name>
        <dbReference type="ChEBI" id="CHEBI:29105"/>
    </cofactor>
    <text evidence="1">Binds 1 zinc ion per subunit.</text>
</comment>
<comment type="subunit">
    <text evidence="6 7 9 10 11 12">Interacts with SIN3, SAP18 and TPR1. Interacts with CDKE-1, MED14 and LUG. Interacts with TPL (PubMed:23034631). Interacts with AHL22 (PubMed:22442143).</text>
</comment>
<comment type="interaction">
    <interactant intactId="EBI-593040">
        <id>O22446</id>
    </interactant>
    <interactant intactId="EBI-965964">
        <id>O64644</id>
        <label>At2g45640</label>
    </interactant>
    <organismsDiffer>false</organismsDiffer>
    <experiments>2</experiments>
</comment>
<comment type="interaction">
    <interactant intactId="EBI-593040">
        <id>O22446</id>
    </interactant>
    <interactant intactId="EBI-1993263">
        <id>Q8GWF1</id>
        <label>WRKY38</label>
    </interactant>
    <organismsDiffer>false</organismsDiffer>
    <experiments>2</experiments>
</comment>
<comment type="interaction">
    <interactant intactId="EBI-593040">
        <id>O22446</id>
    </interactant>
    <interactant intactId="EBI-1993243">
        <id>Q9LZV6</id>
        <label>WRKY62</label>
    </interactant>
    <organismsDiffer>false</organismsDiffer>
    <experiments>5</experiments>
</comment>
<comment type="interaction">
    <interactant intactId="EBI-593040">
        <id>O22446</id>
    </interactant>
    <interactant intactId="EBI-593035">
        <id>Q6DLS1</id>
        <label>SCL1</label>
    </interactant>
    <organismsDiffer>true</organismsDiffer>
    <experiments>3</experiments>
</comment>
<comment type="subcellular location">
    <subcellularLocation>
        <location evidence="5 8">Nucleus</location>
    </subcellularLocation>
    <text>excluded from the nucleolus, but associated with the condensing chromatids.</text>
</comment>
<comment type="alternative products">
    <event type="alternative splicing"/>
    <isoform>
        <id>O22446-1</id>
        <name>1</name>
        <sequence type="displayed"/>
    </isoform>
    <text>A number of isoforms are produced. According to EST sequences.</text>
</comment>
<comment type="tissue specificity">
    <text evidence="3 4 8">Highly expressed in leaves, stems, flowers and young siliques.</text>
</comment>
<comment type="induction">
    <text evidence="5 8">Induced by jasmonic acid, ethylene, wounding and pathogen infection. Inhibited by sodium butyrate.</text>
</comment>
<comment type="miscellaneous">
    <text evidence="4">Loss-of-function mutant (antisense inhibition) has an increased level of tetraacetylated histone H4 and shows late flowering, developmental pleiotropy and increased symptoms when infected by a pathogen.</text>
</comment>
<comment type="similarity">
    <text evidence="17">Belongs to the histone deacetylase family. HD type 1 subfamily.</text>
</comment>
<proteinExistence type="evidence at protein level"/>
<sequence length="501" mass="56023">MDTGGNSLASGPDGVKRKVCYFYDPEVGNYYYGQGHPMKPHRIRMTHALLAHYGLLQHMQVLKPFPARDRDLCRFHADDYVSFLRSITPETQQDQIRQLKRFNVGEDCPVFDGLYSFCQTYAGGSVGGSVKLNHGLCDIAINWAGGLHHAKKCEASGFCYVNDIVLAILELLKQHERVLYVDIDIHHGDGVEEAFYATDRVMTVSFHKFGDYFPGTGHIQDIGYGSGKYYSLNVPLDDGIDDESYHLLFKPIMGKVMEIFRPGAVVLQCGADSLSGDRLGCFNLSIKGHAECVKFMRSFNVPLLLLGGGGYTIRNVARCWCYETGVALGVEVEDKMPEHEYYEYFGPDYTLHVAPSNMENKNSRQMLEEIRNDLLHNLSKLQHAPSVPFQERPPDTETPEVDEDQEDGDKRWDPDSDMDVDDDRKPIPSRVKREAVEPDTKDKDGLKGIMERGKGCEVEVDESGSTKVTGVNPVGVEEASVKMEEEGTNKGGAEQAFPPKT</sequence>
<evidence type="ECO:0000250" key="1">
    <source>
        <dbReference type="UniProtKB" id="Q8GXJ1"/>
    </source>
</evidence>
<evidence type="ECO:0000256" key="2">
    <source>
        <dbReference type="SAM" id="MobiDB-lite"/>
    </source>
</evidence>
<evidence type="ECO:0000269" key="3">
    <source>
    </source>
</evidence>
<evidence type="ECO:0000269" key="4">
    <source>
    </source>
</evidence>
<evidence type="ECO:0000269" key="5">
    <source>
    </source>
</evidence>
<evidence type="ECO:0000269" key="6">
    <source>
    </source>
</evidence>
<evidence type="ECO:0000269" key="7">
    <source>
    </source>
</evidence>
<evidence type="ECO:0000269" key="8">
    <source>
    </source>
</evidence>
<evidence type="ECO:0000269" key="9">
    <source>
    </source>
</evidence>
<evidence type="ECO:0000269" key="10">
    <source>
    </source>
</evidence>
<evidence type="ECO:0000269" key="11">
    <source>
    </source>
</evidence>
<evidence type="ECO:0000269" key="12">
    <source>
    </source>
</evidence>
<evidence type="ECO:0000269" key="13">
    <source>
    </source>
</evidence>
<evidence type="ECO:0000303" key="14">
    <source>
    </source>
</evidence>
<evidence type="ECO:0000303" key="15">
    <source>
    </source>
</evidence>
<evidence type="ECO:0000303" key="16">
    <source>
    </source>
</evidence>
<evidence type="ECO:0000305" key="17"/>
<evidence type="ECO:0000312" key="18">
    <source>
        <dbReference type="Araport" id="AT4G38130"/>
    </source>
</evidence>
<evidence type="ECO:0000312" key="19">
    <source>
        <dbReference type="EMBL" id="CAB37553.1"/>
    </source>
</evidence>
<evidence type="ECO:0007744" key="20">
    <source>
    </source>
</evidence>
<accession>O22446</accession>
<accession>Q0WWG3</accession>
<accession>Q9SZL3</accession>
<keyword id="KW-0025">Alternative splicing</keyword>
<keyword id="KW-0156">Chromatin regulator</keyword>
<keyword id="KW-0378">Hydrolase</keyword>
<keyword id="KW-0479">Metal-binding</keyword>
<keyword id="KW-0539">Nucleus</keyword>
<keyword id="KW-0597">Phosphoprotein</keyword>
<keyword id="KW-1185">Reference proteome</keyword>
<keyword id="KW-0678">Repressor</keyword>
<keyword id="KW-0804">Transcription</keyword>
<keyword id="KW-0805">Transcription regulation</keyword>
<keyword id="KW-0862">Zinc</keyword>
<name>HDA19_ARATH</name>
<organism>
    <name type="scientific">Arabidopsis thaliana</name>
    <name type="common">Mouse-ear cress</name>
    <dbReference type="NCBI Taxonomy" id="3702"/>
    <lineage>
        <taxon>Eukaryota</taxon>
        <taxon>Viridiplantae</taxon>
        <taxon>Streptophyta</taxon>
        <taxon>Embryophyta</taxon>
        <taxon>Tracheophyta</taxon>
        <taxon>Spermatophyta</taxon>
        <taxon>Magnoliopsida</taxon>
        <taxon>eudicotyledons</taxon>
        <taxon>Gunneridae</taxon>
        <taxon>Pentapetalae</taxon>
        <taxon>rosids</taxon>
        <taxon>malvids</taxon>
        <taxon>Brassicales</taxon>
        <taxon>Brassicaceae</taxon>
        <taxon>Camelineae</taxon>
        <taxon>Arabidopsis</taxon>
    </lineage>
</organism>